<dbReference type="EMBL" id="FM200053">
    <property type="protein sequence ID" value="CAR59498.1"/>
    <property type="molecule type" value="Genomic_DNA"/>
</dbReference>
<dbReference type="RefSeq" id="WP_000190998.1">
    <property type="nucleotide sequence ID" value="NC_011147.1"/>
</dbReference>
<dbReference type="SMR" id="B5BKD9"/>
<dbReference type="KEGG" id="sek:SSPA1323"/>
<dbReference type="HOGENOM" id="CLU_037628_6_2_6"/>
<dbReference type="UniPathway" id="UPA00488"/>
<dbReference type="Proteomes" id="UP000001869">
    <property type="component" value="Chromosome"/>
</dbReference>
<dbReference type="GO" id="GO:0003700">
    <property type="term" value="F:DNA-binding transcription factor activity"/>
    <property type="evidence" value="ECO:0007669"/>
    <property type="project" value="TreeGrafter"/>
</dbReference>
<dbReference type="GO" id="GO:0000976">
    <property type="term" value="F:transcription cis-regulatory region binding"/>
    <property type="evidence" value="ECO:0007669"/>
    <property type="project" value="TreeGrafter"/>
</dbReference>
<dbReference type="GO" id="GO:0045892">
    <property type="term" value="P:negative regulation of DNA-templated transcription"/>
    <property type="evidence" value="ECO:0007669"/>
    <property type="project" value="UniProtKB-UniRule"/>
</dbReference>
<dbReference type="GO" id="GO:0006164">
    <property type="term" value="P:purine nucleotide biosynthetic process"/>
    <property type="evidence" value="ECO:0007669"/>
    <property type="project" value="UniProtKB-UniPathway"/>
</dbReference>
<dbReference type="CDD" id="cd01392">
    <property type="entry name" value="HTH_LacI"/>
    <property type="match status" value="1"/>
</dbReference>
<dbReference type="CDD" id="cd06275">
    <property type="entry name" value="PBP1_PurR"/>
    <property type="match status" value="1"/>
</dbReference>
<dbReference type="FunFam" id="1.10.260.40:FF:000002">
    <property type="entry name" value="HTH-type transcriptional repressor PurR"/>
    <property type="match status" value="1"/>
</dbReference>
<dbReference type="FunFam" id="3.40.50.2300:FF:000045">
    <property type="entry name" value="HTH-type transcriptional repressor PurR"/>
    <property type="match status" value="1"/>
</dbReference>
<dbReference type="Gene3D" id="3.40.50.2300">
    <property type="match status" value="2"/>
</dbReference>
<dbReference type="Gene3D" id="1.10.260.40">
    <property type="entry name" value="lambda repressor-like DNA-binding domains"/>
    <property type="match status" value="1"/>
</dbReference>
<dbReference type="HAMAP" id="MF_01277">
    <property type="entry name" value="HTH_type_PurR"/>
    <property type="match status" value="1"/>
</dbReference>
<dbReference type="InterPro" id="IPR000843">
    <property type="entry name" value="HTH_LacI"/>
</dbReference>
<dbReference type="InterPro" id="IPR046335">
    <property type="entry name" value="LacI/GalR-like_sensor"/>
</dbReference>
<dbReference type="InterPro" id="IPR010982">
    <property type="entry name" value="Lambda_DNA-bd_dom_sf"/>
</dbReference>
<dbReference type="InterPro" id="IPR028082">
    <property type="entry name" value="Peripla_BP_I"/>
</dbReference>
<dbReference type="InterPro" id="IPR023588">
    <property type="entry name" value="Tscrpt_reg_HTH_PurR"/>
</dbReference>
<dbReference type="NCBIfam" id="NF007979">
    <property type="entry name" value="PRK10703.1"/>
    <property type="match status" value="1"/>
</dbReference>
<dbReference type="PANTHER" id="PTHR30146:SF148">
    <property type="entry name" value="HTH-TYPE TRANSCRIPTIONAL REPRESSOR PURR-RELATED"/>
    <property type="match status" value="1"/>
</dbReference>
<dbReference type="PANTHER" id="PTHR30146">
    <property type="entry name" value="LACI-RELATED TRANSCRIPTIONAL REPRESSOR"/>
    <property type="match status" value="1"/>
</dbReference>
<dbReference type="Pfam" id="PF00356">
    <property type="entry name" value="LacI"/>
    <property type="match status" value="1"/>
</dbReference>
<dbReference type="Pfam" id="PF13377">
    <property type="entry name" value="Peripla_BP_3"/>
    <property type="match status" value="1"/>
</dbReference>
<dbReference type="PRINTS" id="PR00036">
    <property type="entry name" value="HTHLACI"/>
</dbReference>
<dbReference type="SMART" id="SM00354">
    <property type="entry name" value="HTH_LACI"/>
    <property type="match status" value="1"/>
</dbReference>
<dbReference type="SUPFAM" id="SSF47413">
    <property type="entry name" value="lambda repressor-like DNA-binding domains"/>
    <property type="match status" value="1"/>
</dbReference>
<dbReference type="SUPFAM" id="SSF53822">
    <property type="entry name" value="Periplasmic binding protein-like I"/>
    <property type="match status" value="1"/>
</dbReference>
<dbReference type="PROSITE" id="PS00356">
    <property type="entry name" value="HTH_LACI_1"/>
    <property type="match status" value="1"/>
</dbReference>
<dbReference type="PROSITE" id="PS50932">
    <property type="entry name" value="HTH_LACI_2"/>
    <property type="match status" value="1"/>
</dbReference>
<name>PURR_SALPK</name>
<reference key="1">
    <citation type="journal article" date="2009" name="BMC Genomics">
        <title>Pseudogene accumulation in the evolutionary histories of Salmonella enterica serovars Paratyphi A and Typhi.</title>
        <authorList>
            <person name="Holt K.E."/>
            <person name="Thomson N.R."/>
            <person name="Wain J."/>
            <person name="Langridge G.C."/>
            <person name="Hasan R."/>
            <person name="Bhutta Z.A."/>
            <person name="Quail M.A."/>
            <person name="Norbertczak H."/>
            <person name="Walker D."/>
            <person name="Simmonds M."/>
            <person name="White B."/>
            <person name="Bason N."/>
            <person name="Mungall K."/>
            <person name="Dougan G."/>
            <person name="Parkhill J."/>
        </authorList>
    </citation>
    <scope>NUCLEOTIDE SEQUENCE [LARGE SCALE GENOMIC DNA]</scope>
    <source>
        <strain>AKU_12601</strain>
    </source>
</reference>
<proteinExistence type="inferred from homology"/>
<feature type="chain" id="PRO_1000140303" description="HTH-type transcriptional repressor PurR">
    <location>
        <begin position="1"/>
        <end position="341"/>
    </location>
</feature>
<feature type="domain" description="HTH lacI-type" evidence="1">
    <location>
        <begin position="2"/>
        <end position="56"/>
    </location>
</feature>
<feature type="DNA-binding region" description="H-T-H motif" evidence="1">
    <location>
        <begin position="4"/>
        <end position="23"/>
    </location>
</feature>
<feature type="DNA-binding region" evidence="1">
    <location>
        <begin position="48"/>
        <end position="56"/>
    </location>
</feature>
<feature type="binding site" evidence="1">
    <location>
        <position position="73"/>
    </location>
    <ligand>
        <name>hypoxanthine</name>
        <dbReference type="ChEBI" id="CHEBI:17368"/>
    </ligand>
</feature>
<feature type="binding site" evidence="1">
    <location>
        <position position="190"/>
    </location>
    <ligand>
        <name>hypoxanthine</name>
        <dbReference type="ChEBI" id="CHEBI:17368"/>
    </ligand>
</feature>
<feature type="binding site" evidence="1">
    <location>
        <position position="192"/>
    </location>
    <ligand>
        <name>hypoxanthine</name>
        <dbReference type="ChEBI" id="CHEBI:17368"/>
    </ligand>
</feature>
<feature type="binding site" evidence="1">
    <location>
        <position position="221"/>
    </location>
    <ligand>
        <name>hypoxanthine</name>
        <dbReference type="ChEBI" id="CHEBI:17368"/>
    </ligand>
</feature>
<feature type="binding site" evidence="1">
    <location>
        <position position="275"/>
    </location>
    <ligand>
        <name>hypoxanthine</name>
        <dbReference type="ChEBI" id="CHEBI:17368"/>
    </ligand>
</feature>
<keyword id="KW-0238">DNA-binding</keyword>
<keyword id="KW-0658">Purine biosynthesis</keyword>
<keyword id="KW-0678">Repressor</keyword>
<keyword id="KW-0804">Transcription</keyword>
<keyword id="KW-0805">Transcription regulation</keyword>
<sequence>MATIKDVAKRANVSTTTVSHVINKTRFVAEETRNAVWTAIKELHYSPSAVARSLKVNHTKSIGLLATSSEAAYFAEIIEAVEKNCFQKGYTLILGNAWNNLEKQRAYLSMMAQKRVDGLLVMCSEYPEPLLSMLEEYRHIPMVVMDWGEAKADFTDTVIDNAFAGGYMAGRYLVERGHRDIGVIPGPLERNTGAGRLAGFMKAMEEALINVPDNWIVQGDFEPESGYHAMQQILSQSHRPTAVFCGGDIMAMGALCAADEMGLRVPQDVSVIGYDNVRNARYFTPALTTIHQPKDSLGETAFNMLLDRIVNKREESQSIEVHPRLVERRSVADGPFRDYRR</sequence>
<gene>
    <name evidence="1" type="primary">purR</name>
    <name type="ordered locus">SSPA1323</name>
</gene>
<organism>
    <name type="scientific">Salmonella paratyphi A (strain AKU_12601)</name>
    <dbReference type="NCBI Taxonomy" id="554290"/>
    <lineage>
        <taxon>Bacteria</taxon>
        <taxon>Pseudomonadati</taxon>
        <taxon>Pseudomonadota</taxon>
        <taxon>Gammaproteobacteria</taxon>
        <taxon>Enterobacterales</taxon>
        <taxon>Enterobacteriaceae</taxon>
        <taxon>Salmonella</taxon>
    </lineage>
</organism>
<accession>B5BKD9</accession>
<comment type="function">
    <text evidence="1">Is the main repressor of the genes involved in the de novo synthesis of purine nucleotides, regulating purB, purC, purEK, purF, purHD, purL, purMN and guaBA expression. PurR is allosterically activated to bind its cognate DNA by binding the purine corepressors, hypoxanthine or guanine, thereby effecting transcription repression.</text>
</comment>
<comment type="pathway">
    <text>Purine metabolism; purine nucleotide biosynthesis [regulation].</text>
</comment>
<comment type="subunit">
    <text evidence="1">Homodimer.</text>
</comment>
<comment type="domain">
    <text evidence="1">Consists of two structural and functional domains: an N-terminal DNA-binding domain, approximately the first 60 residues, and a larger C-terminal domain, approximately 280 residues, which imparts the function of corepressor binding and oligomerization.</text>
</comment>
<protein>
    <recommendedName>
        <fullName evidence="1">HTH-type transcriptional repressor PurR</fullName>
    </recommendedName>
    <alternativeName>
        <fullName evidence="1">Pur regulon repressor</fullName>
    </alternativeName>
    <alternativeName>
        <fullName evidence="1">Purine nucleotide synthesis repressor</fullName>
    </alternativeName>
</protein>
<evidence type="ECO:0000255" key="1">
    <source>
        <dbReference type="HAMAP-Rule" id="MF_01277"/>
    </source>
</evidence>